<feature type="chain" id="PRO_0000129431" description="Large ribosomal subunit protein uL23">
    <location>
        <begin position="1"/>
        <end position="100"/>
    </location>
</feature>
<reference key="1">
    <citation type="journal article" date="2001" name="Nature">
        <title>Genome sequence of Yersinia pestis, the causative agent of plague.</title>
        <authorList>
            <person name="Parkhill J."/>
            <person name="Wren B.W."/>
            <person name="Thomson N.R."/>
            <person name="Titball R.W."/>
            <person name="Holden M.T.G."/>
            <person name="Prentice M.B."/>
            <person name="Sebaihia M."/>
            <person name="James K.D."/>
            <person name="Churcher C.M."/>
            <person name="Mungall K.L."/>
            <person name="Baker S."/>
            <person name="Basham D."/>
            <person name="Bentley S.D."/>
            <person name="Brooks K."/>
            <person name="Cerdeno-Tarraga A.-M."/>
            <person name="Chillingworth T."/>
            <person name="Cronin A."/>
            <person name="Davies R.M."/>
            <person name="Davis P."/>
            <person name="Dougan G."/>
            <person name="Feltwell T."/>
            <person name="Hamlin N."/>
            <person name="Holroyd S."/>
            <person name="Jagels K."/>
            <person name="Karlyshev A.V."/>
            <person name="Leather S."/>
            <person name="Moule S."/>
            <person name="Oyston P.C.F."/>
            <person name="Quail M.A."/>
            <person name="Rutherford K.M."/>
            <person name="Simmonds M."/>
            <person name="Skelton J."/>
            <person name="Stevens K."/>
            <person name="Whitehead S."/>
            <person name="Barrell B.G."/>
        </authorList>
    </citation>
    <scope>NUCLEOTIDE SEQUENCE [LARGE SCALE GENOMIC DNA]</scope>
    <source>
        <strain>CO-92 / Biovar Orientalis</strain>
    </source>
</reference>
<reference key="2">
    <citation type="journal article" date="2002" name="J. Bacteriol.">
        <title>Genome sequence of Yersinia pestis KIM.</title>
        <authorList>
            <person name="Deng W."/>
            <person name="Burland V."/>
            <person name="Plunkett G. III"/>
            <person name="Boutin A."/>
            <person name="Mayhew G.F."/>
            <person name="Liss P."/>
            <person name="Perna N.T."/>
            <person name="Rose D.J."/>
            <person name="Mau B."/>
            <person name="Zhou S."/>
            <person name="Schwartz D.C."/>
            <person name="Fetherston J.D."/>
            <person name="Lindler L.E."/>
            <person name="Brubaker R.R."/>
            <person name="Plano G.V."/>
            <person name="Straley S.C."/>
            <person name="McDonough K.A."/>
            <person name="Nilles M.L."/>
            <person name="Matson J.S."/>
            <person name="Blattner F.R."/>
            <person name="Perry R.D."/>
        </authorList>
    </citation>
    <scope>NUCLEOTIDE SEQUENCE [LARGE SCALE GENOMIC DNA]</scope>
    <source>
        <strain>KIM10+ / Biovar Mediaevalis</strain>
    </source>
</reference>
<reference key="3">
    <citation type="journal article" date="2004" name="DNA Res.">
        <title>Complete genome sequence of Yersinia pestis strain 91001, an isolate avirulent to humans.</title>
        <authorList>
            <person name="Song Y."/>
            <person name="Tong Z."/>
            <person name="Wang J."/>
            <person name="Wang L."/>
            <person name="Guo Z."/>
            <person name="Han Y."/>
            <person name="Zhang J."/>
            <person name="Pei D."/>
            <person name="Zhou D."/>
            <person name="Qin H."/>
            <person name="Pang X."/>
            <person name="Han Y."/>
            <person name="Zhai J."/>
            <person name="Li M."/>
            <person name="Cui B."/>
            <person name="Qi Z."/>
            <person name="Jin L."/>
            <person name="Dai R."/>
            <person name="Chen F."/>
            <person name="Li S."/>
            <person name="Ye C."/>
            <person name="Du Z."/>
            <person name="Lin W."/>
            <person name="Wang J."/>
            <person name="Yu J."/>
            <person name="Yang H."/>
            <person name="Wang J."/>
            <person name="Huang P."/>
            <person name="Yang R."/>
        </authorList>
    </citation>
    <scope>NUCLEOTIDE SEQUENCE [LARGE SCALE GENOMIC DNA]</scope>
    <source>
        <strain>91001 / Biovar Mediaevalis</strain>
    </source>
</reference>
<keyword id="KW-1185">Reference proteome</keyword>
<keyword id="KW-0687">Ribonucleoprotein</keyword>
<keyword id="KW-0689">Ribosomal protein</keyword>
<keyword id="KW-0694">RNA-binding</keyword>
<keyword id="KW-0699">rRNA-binding</keyword>
<sequence>MIREERLLKVLRSPHVSEKASAAMEKNNTIVLKVAKDATKAEIKAAVQKLFEVEVEDVNTLLVKGKSKRHGQRVGRRSDWKKAYVTLKEGQNLDFIGGAE</sequence>
<organism>
    <name type="scientific">Yersinia pestis</name>
    <dbReference type="NCBI Taxonomy" id="632"/>
    <lineage>
        <taxon>Bacteria</taxon>
        <taxon>Pseudomonadati</taxon>
        <taxon>Pseudomonadota</taxon>
        <taxon>Gammaproteobacteria</taxon>
        <taxon>Enterobacterales</taxon>
        <taxon>Yersiniaceae</taxon>
        <taxon>Yersinia</taxon>
    </lineage>
</organism>
<proteinExistence type="inferred from homology"/>
<comment type="function">
    <text evidence="1">One of the early assembly proteins it binds 23S rRNA. One of the proteins that surrounds the polypeptide exit tunnel on the outside of the ribosome. Forms the main docking site for trigger factor binding to the ribosome.</text>
</comment>
<comment type="subunit">
    <text evidence="1">Part of the 50S ribosomal subunit. Contacts protein L29, and trigger factor when it is bound to the ribosome.</text>
</comment>
<comment type="similarity">
    <text evidence="1">Belongs to the universal ribosomal protein uL23 family.</text>
</comment>
<dbReference type="EMBL" id="AL590842">
    <property type="protein sequence ID" value="CAL18894.1"/>
    <property type="molecule type" value="Genomic_DNA"/>
</dbReference>
<dbReference type="EMBL" id="AE009952">
    <property type="protein sequence ID" value="AAM87536.1"/>
    <property type="molecule type" value="Genomic_DNA"/>
</dbReference>
<dbReference type="EMBL" id="AE017042">
    <property type="protein sequence ID" value="AAS60485.1"/>
    <property type="molecule type" value="Genomic_DNA"/>
</dbReference>
<dbReference type="PIR" id="AD0026">
    <property type="entry name" value="AD0026"/>
</dbReference>
<dbReference type="RefSeq" id="WP_002213423.1">
    <property type="nucleotide sequence ID" value="NZ_WUCM01000078.1"/>
</dbReference>
<dbReference type="RefSeq" id="YP_002345292.1">
    <property type="nucleotide sequence ID" value="NC_003143.1"/>
</dbReference>
<dbReference type="SMR" id="P69963"/>
<dbReference type="STRING" id="214092.YPO0212"/>
<dbReference type="PaxDb" id="214092-YPO0212"/>
<dbReference type="DNASU" id="1148939"/>
<dbReference type="EnsemblBacteria" id="AAS60485">
    <property type="protein sequence ID" value="AAS60485"/>
    <property type="gene ID" value="YP_0209"/>
</dbReference>
<dbReference type="GeneID" id="96663194"/>
<dbReference type="KEGG" id="ype:YPO0212"/>
<dbReference type="KEGG" id="ypk:y3992"/>
<dbReference type="KEGG" id="ypm:YP_0209"/>
<dbReference type="PATRIC" id="fig|214092.21.peg.441"/>
<dbReference type="eggNOG" id="COG0089">
    <property type="taxonomic scope" value="Bacteria"/>
</dbReference>
<dbReference type="HOGENOM" id="CLU_037562_3_1_6"/>
<dbReference type="OMA" id="DHRAAKP"/>
<dbReference type="OrthoDB" id="9793353at2"/>
<dbReference type="Proteomes" id="UP000000815">
    <property type="component" value="Chromosome"/>
</dbReference>
<dbReference type="Proteomes" id="UP000001019">
    <property type="component" value="Chromosome"/>
</dbReference>
<dbReference type="Proteomes" id="UP000002490">
    <property type="component" value="Chromosome"/>
</dbReference>
<dbReference type="GO" id="GO:0022625">
    <property type="term" value="C:cytosolic large ribosomal subunit"/>
    <property type="evidence" value="ECO:0000318"/>
    <property type="project" value="GO_Central"/>
</dbReference>
<dbReference type="GO" id="GO:0019843">
    <property type="term" value="F:rRNA binding"/>
    <property type="evidence" value="ECO:0007669"/>
    <property type="project" value="UniProtKB-UniRule"/>
</dbReference>
<dbReference type="GO" id="GO:0003735">
    <property type="term" value="F:structural constituent of ribosome"/>
    <property type="evidence" value="ECO:0000318"/>
    <property type="project" value="GO_Central"/>
</dbReference>
<dbReference type="GO" id="GO:0006412">
    <property type="term" value="P:translation"/>
    <property type="evidence" value="ECO:0007669"/>
    <property type="project" value="UniProtKB-UniRule"/>
</dbReference>
<dbReference type="FunFam" id="3.30.70.330:FF:000001">
    <property type="entry name" value="50S ribosomal protein L23"/>
    <property type="match status" value="1"/>
</dbReference>
<dbReference type="Gene3D" id="3.30.70.330">
    <property type="match status" value="1"/>
</dbReference>
<dbReference type="HAMAP" id="MF_01369_B">
    <property type="entry name" value="Ribosomal_uL23_B"/>
    <property type="match status" value="1"/>
</dbReference>
<dbReference type="InterPro" id="IPR012677">
    <property type="entry name" value="Nucleotide-bd_a/b_plait_sf"/>
</dbReference>
<dbReference type="InterPro" id="IPR013025">
    <property type="entry name" value="Ribosomal_uL23-like"/>
</dbReference>
<dbReference type="InterPro" id="IPR012678">
    <property type="entry name" value="Ribosomal_uL23/eL15/eS24_sf"/>
</dbReference>
<dbReference type="InterPro" id="IPR001014">
    <property type="entry name" value="Ribosomal_uL23_CS"/>
</dbReference>
<dbReference type="NCBIfam" id="NF004358">
    <property type="entry name" value="PRK05738.1-1"/>
    <property type="match status" value="1"/>
</dbReference>
<dbReference type="NCBIfam" id="NF004359">
    <property type="entry name" value="PRK05738.1-3"/>
    <property type="match status" value="1"/>
</dbReference>
<dbReference type="NCBIfam" id="NF004363">
    <property type="entry name" value="PRK05738.2-4"/>
    <property type="match status" value="1"/>
</dbReference>
<dbReference type="NCBIfam" id="NF004366">
    <property type="entry name" value="PRK05738.3-2"/>
    <property type="match status" value="1"/>
</dbReference>
<dbReference type="PANTHER" id="PTHR11620">
    <property type="entry name" value="60S RIBOSOMAL PROTEIN L23A"/>
    <property type="match status" value="1"/>
</dbReference>
<dbReference type="Pfam" id="PF00276">
    <property type="entry name" value="Ribosomal_L23"/>
    <property type="match status" value="1"/>
</dbReference>
<dbReference type="SUPFAM" id="SSF54189">
    <property type="entry name" value="Ribosomal proteins S24e, L23 and L15e"/>
    <property type="match status" value="1"/>
</dbReference>
<dbReference type="PROSITE" id="PS00050">
    <property type="entry name" value="RIBOSOMAL_L23"/>
    <property type="match status" value="1"/>
</dbReference>
<evidence type="ECO:0000255" key="1">
    <source>
        <dbReference type="HAMAP-Rule" id="MF_01369"/>
    </source>
</evidence>
<evidence type="ECO:0000305" key="2"/>
<protein>
    <recommendedName>
        <fullName evidence="1">Large ribosomal subunit protein uL23</fullName>
    </recommendedName>
    <alternativeName>
        <fullName evidence="2">50S ribosomal protein L23</fullName>
    </alternativeName>
</protein>
<name>RL23_YERPE</name>
<gene>
    <name evidence="1" type="primary">rplW</name>
    <name type="ordered locus">YPO0212</name>
    <name type="ordered locus">y3992</name>
    <name type="ordered locus">YP_0209</name>
</gene>
<accession>P69963</accession>
<accession>P11254</accession>
<accession>Q0WK96</accession>
<accession>Q664S3</accession>